<accession>Q88DZ2</accession>
<feature type="signal peptide" description="Tat-type signal" evidence="1">
    <location>
        <begin position="1"/>
        <end position="54"/>
    </location>
</feature>
<feature type="chain" id="PRO_0000070692" description="Protein-methionine-sulfoxide reductase catalytic subunit MsrP" evidence="1">
    <location>
        <begin position="55"/>
        <end position="337"/>
    </location>
</feature>
<feature type="binding site" evidence="1">
    <location>
        <position position="94"/>
    </location>
    <ligand>
        <name>Mo-molybdopterin</name>
        <dbReference type="ChEBI" id="CHEBI:71302"/>
    </ligand>
</feature>
<feature type="binding site" evidence="1">
    <location>
        <begin position="97"/>
        <end position="98"/>
    </location>
    <ligand>
        <name>Mo-molybdopterin</name>
        <dbReference type="ChEBI" id="CHEBI:71302"/>
    </ligand>
</feature>
<feature type="binding site" evidence="1">
    <location>
        <position position="152"/>
    </location>
    <ligand>
        <name>Mo-molybdopterin</name>
        <dbReference type="ChEBI" id="CHEBI:71302"/>
    </ligand>
    <ligandPart>
        <name>Mo</name>
        <dbReference type="ChEBI" id="CHEBI:28685"/>
    </ligandPart>
</feature>
<feature type="binding site" evidence="1">
    <location>
        <position position="187"/>
    </location>
    <ligand>
        <name>Mo-molybdopterin</name>
        <dbReference type="ChEBI" id="CHEBI:71302"/>
    </ligand>
</feature>
<feature type="binding site" evidence="1">
    <location>
        <position position="237"/>
    </location>
    <ligand>
        <name>Mo-molybdopterin</name>
        <dbReference type="ChEBI" id="CHEBI:71302"/>
    </ligand>
</feature>
<feature type="binding site" evidence="1">
    <location>
        <position position="242"/>
    </location>
    <ligand>
        <name>Mo-molybdopterin</name>
        <dbReference type="ChEBI" id="CHEBI:71302"/>
    </ligand>
</feature>
<feature type="binding site" evidence="1">
    <location>
        <begin position="253"/>
        <end position="255"/>
    </location>
    <ligand>
        <name>Mo-molybdopterin</name>
        <dbReference type="ChEBI" id="CHEBI:71302"/>
    </ligand>
</feature>
<keyword id="KW-0479">Metal-binding</keyword>
<keyword id="KW-0500">Molybdenum</keyword>
<keyword id="KW-0560">Oxidoreductase</keyword>
<keyword id="KW-0574">Periplasm</keyword>
<keyword id="KW-1185">Reference proteome</keyword>
<keyword id="KW-0732">Signal</keyword>
<gene>
    <name evidence="1" type="primary">msrP</name>
    <name type="ordered locus">PP_4676</name>
</gene>
<comment type="function">
    <text evidence="1">Part of the MsrPQ system that repairs oxidized periplasmic proteins containing methionine sulfoxide residues (Met-O), using respiratory chain electrons. Thus protects these proteins from oxidative-stress damage caused by reactive species of oxygen and chlorine generated by the host defense mechanisms. MsrPQ is essential for the maintenance of envelope integrity under bleach stress, rescuing a wide series of structurally unrelated periplasmic proteins from methionine oxidation. The catalytic subunit MsrP is non-stereospecific, being able to reduce both (R-) and (S-) diastereoisomers of methionine sulfoxide.</text>
</comment>
<comment type="catalytic activity">
    <reaction evidence="1">
        <text>L-methionyl-[protein] + a quinone + H2O = L-methionyl-(S)-S-oxide-[protein] + a quinol</text>
        <dbReference type="Rhea" id="RHEA:51292"/>
        <dbReference type="Rhea" id="RHEA-COMP:12313"/>
        <dbReference type="Rhea" id="RHEA-COMP:12315"/>
        <dbReference type="ChEBI" id="CHEBI:15377"/>
        <dbReference type="ChEBI" id="CHEBI:16044"/>
        <dbReference type="ChEBI" id="CHEBI:24646"/>
        <dbReference type="ChEBI" id="CHEBI:44120"/>
        <dbReference type="ChEBI" id="CHEBI:132124"/>
    </reaction>
</comment>
<comment type="catalytic activity">
    <reaction evidence="1">
        <text>L-methionyl-[protein] + a quinone + H2O = L-methionyl-(R)-S-oxide-[protein] + a quinol</text>
        <dbReference type="Rhea" id="RHEA:51296"/>
        <dbReference type="Rhea" id="RHEA-COMP:12313"/>
        <dbReference type="Rhea" id="RHEA-COMP:12314"/>
        <dbReference type="ChEBI" id="CHEBI:15377"/>
        <dbReference type="ChEBI" id="CHEBI:16044"/>
        <dbReference type="ChEBI" id="CHEBI:24646"/>
        <dbReference type="ChEBI" id="CHEBI:45764"/>
        <dbReference type="ChEBI" id="CHEBI:132124"/>
    </reaction>
</comment>
<comment type="cofactor">
    <cofactor evidence="1">
        <name>Mo-molybdopterin</name>
        <dbReference type="ChEBI" id="CHEBI:71302"/>
    </cofactor>
    <text evidence="1">Binds 1 Mo-molybdopterin (Mo-MPT) cofactor per subunit.</text>
</comment>
<comment type="subunit">
    <text evidence="1">Heterodimer of a catalytic subunit (MsrP) and a heme-binding subunit (MsrQ).</text>
</comment>
<comment type="subcellular location">
    <subcellularLocation>
        <location evidence="1">Periplasm</location>
    </subcellularLocation>
    <text evidence="1">Is attached to the inner membrane when interacting with the MsrQ subunit.</text>
</comment>
<comment type="PTM">
    <text evidence="1">Predicted to be exported by the Tat system. The position of the signal peptide cleavage has not been experimentally proven.</text>
</comment>
<comment type="similarity">
    <text evidence="1">Belongs to the MsrP family.</text>
</comment>
<comment type="sequence caution" evidence="2">
    <conflict type="erroneous initiation">
        <sequence resource="EMBL-CDS" id="AAN70249"/>
    </conflict>
</comment>
<organism>
    <name type="scientific">Pseudomonas putida (strain ATCC 47054 / DSM 6125 / CFBP 8728 / NCIMB 11950 / KT2440)</name>
    <dbReference type="NCBI Taxonomy" id="160488"/>
    <lineage>
        <taxon>Bacteria</taxon>
        <taxon>Pseudomonadati</taxon>
        <taxon>Pseudomonadota</taxon>
        <taxon>Gammaproteobacteria</taxon>
        <taxon>Pseudomonadales</taxon>
        <taxon>Pseudomonadaceae</taxon>
        <taxon>Pseudomonas</taxon>
    </lineage>
</organism>
<sequence length="337" mass="37688">MLIKLPRSSECKASEITPEGIYLSRRTLLGGSLAGLALGALPGGVGAAQMSRYADVQAGAAPAWFTDKLAATRWQAVTVKDEAITPFKDATHYNNFYEFGPDKGDPAANGDSLKTEPWSIVVDGEVRKPGRYALEDFVKPYQLEERIYRLRCVEAWSMVIPWLGFPLAQVLKQVEPTSSARYVRFETLKDPQHMPGQRSGFALIDWPYREGLRLDEAMHPLAILAVGMYGRELPNQNGAPLRLVVPWKYGFKSIKSIVRISLVAEQPGTTWEGLAPDEYGFYANVNPTVDHPRWSQARERRLPSGLFSPNVRETQMFNGYADEVASLYTGLDLRKNY</sequence>
<proteinExistence type="inferred from homology"/>
<protein>
    <recommendedName>
        <fullName evidence="1">Protein-methionine-sulfoxide reductase catalytic subunit MsrP</fullName>
        <ecNumber evidence="1">1.8.5.-</ecNumber>
    </recommendedName>
</protein>
<dbReference type="EC" id="1.8.5.-" evidence="1"/>
<dbReference type="EMBL" id="AE015451">
    <property type="protein sequence ID" value="AAN70249.1"/>
    <property type="status" value="ALT_INIT"/>
    <property type="molecule type" value="Genomic_DNA"/>
</dbReference>
<dbReference type="RefSeq" id="NP_746785.1">
    <property type="nucleotide sequence ID" value="NC_002947.4"/>
</dbReference>
<dbReference type="RefSeq" id="WP_049586963.1">
    <property type="nucleotide sequence ID" value="NZ_CP169744.1"/>
</dbReference>
<dbReference type="SMR" id="Q88DZ2"/>
<dbReference type="STRING" id="160488.PP_4676"/>
<dbReference type="PaxDb" id="160488-PP_4676"/>
<dbReference type="GeneID" id="83682389"/>
<dbReference type="KEGG" id="ppu:PP_4676"/>
<dbReference type="PATRIC" id="fig|160488.4.peg.4984"/>
<dbReference type="eggNOG" id="COG2041">
    <property type="taxonomic scope" value="Bacteria"/>
</dbReference>
<dbReference type="HOGENOM" id="CLU_045520_0_0_6"/>
<dbReference type="OrthoDB" id="9795587at2"/>
<dbReference type="PhylomeDB" id="Q88DZ2"/>
<dbReference type="Proteomes" id="UP000000556">
    <property type="component" value="Chromosome"/>
</dbReference>
<dbReference type="GO" id="GO:0042597">
    <property type="term" value="C:periplasmic space"/>
    <property type="evidence" value="ECO:0007669"/>
    <property type="project" value="UniProtKB-SubCell"/>
</dbReference>
<dbReference type="GO" id="GO:0046872">
    <property type="term" value="F:metal ion binding"/>
    <property type="evidence" value="ECO:0007669"/>
    <property type="project" value="UniProtKB-KW"/>
</dbReference>
<dbReference type="GO" id="GO:0043546">
    <property type="term" value="F:molybdopterin cofactor binding"/>
    <property type="evidence" value="ECO:0007669"/>
    <property type="project" value="UniProtKB-UniRule"/>
</dbReference>
<dbReference type="GO" id="GO:0016672">
    <property type="term" value="F:oxidoreductase activity, acting on a sulfur group of donors, quinone or similar compound as acceptor"/>
    <property type="evidence" value="ECO:0007669"/>
    <property type="project" value="UniProtKB-UniRule"/>
</dbReference>
<dbReference type="GO" id="GO:0030091">
    <property type="term" value="P:protein repair"/>
    <property type="evidence" value="ECO:0007669"/>
    <property type="project" value="UniProtKB-UniRule"/>
</dbReference>
<dbReference type="Gene3D" id="3.90.420.10">
    <property type="entry name" value="Oxidoreductase, molybdopterin-binding domain"/>
    <property type="match status" value="1"/>
</dbReference>
<dbReference type="HAMAP" id="MF_01206">
    <property type="entry name" value="MsrP"/>
    <property type="match status" value="1"/>
</dbReference>
<dbReference type="InterPro" id="IPR022867">
    <property type="entry name" value="MsrP"/>
</dbReference>
<dbReference type="InterPro" id="IPR000572">
    <property type="entry name" value="OxRdtase_Mopterin-bd_dom"/>
</dbReference>
<dbReference type="InterPro" id="IPR036374">
    <property type="entry name" value="OxRdtase_Mopterin-bd_sf"/>
</dbReference>
<dbReference type="InterPro" id="IPR006311">
    <property type="entry name" value="TAT_signal"/>
</dbReference>
<dbReference type="NCBIfam" id="NF003767">
    <property type="entry name" value="PRK05363.1"/>
    <property type="match status" value="1"/>
</dbReference>
<dbReference type="PANTHER" id="PTHR43032">
    <property type="entry name" value="PROTEIN-METHIONINE-SULFOXIDE REDUCTASE"/>
    <property type="match status" value="1"/>
</dbReference>
<dbReference type="PANTHER" id="PTHR43032:SF3">
    <property type="entry name" value="PROTEIN-METHIONINE-SULFOXIDE REDUCTASE CATALYTIC SUBUNIT MSRP"/>
    <property type="match status" value="1"/>
</dbReference>
<dbReference type="Pfam" id="PF00174">
    <property type="entry name" value="Oxidored_molyb"/>
    <property type="match status" value="1"/>
</dbReference>
<dbReference type="SUPFAM" id="SSF56524">
    <property type="entry name" value="Oxidoreductase molybdopterin-binding domain"/>
    <property type="match status" value="1"/>
</dbReference>
<dbReference type="PROSITE" id="PS51318">
    <property type="entry name" value="TAT"/>
    <property type="match status" value="1"/>
</dbReference>
<reference key="1">
    <citation type="journal article" date="2002" name="Environ. Microbiol.">
        <title>Complete genome sequence and comparative analysis of the metabolically versatile Pseudomonas putida KT2440.</title>
        <authorList>
            <person name="Nelson K.E."/>
            <person name="Weinel C."/>
            <person name="Paulsen I.T."/>
            <person name="Dodson R.J."/>
            <person name="Hilbert H."/>
            <person name="Martins dos Santos V.A.P."/>
            <person name="Fouts D.E."/>
            <person name="Gill S.R."/>
            <person name="Pop M."/>
            <person name="Holmes M."/>
            <person name="Brinkac L.M."/>
            <person name="Beanan M.J."/>
            <person name="DeBoy R.T."/>
            <person name="Daugherty S.C."/>
            <person name="Kolonay J.F."/>
            <person name="Madupu R."/>
            <person name="Nelson W.C."/>
            <person name="White O."/>
            <person name="Peterson J.D."/>
            <person name="Khouri H.M."/>
            <person name="Hance I."/>
            <person name="Chris Lee P."/>
            <person name="Holtzapple E.K."/>
            <person name="Scanlan D."/>
            <person name="Tran K."/>
            <person name="Moazzez A."/>
            <person name="Utterback T.R."/>
            <person name="Rizzo M."/>
            <person name="Lee K."/>
            <person name="Kosack D."/>
            <person name="Moestl D."/>
            <person name="Wedler H."/>
            <person name="Lauber J."/>
            <person name="Stjepandic D."/>
            <person name="Hoheisel J."/>
            <person name="Straetz M."/>
            <person name="Heim S."/>
            <person name="Kiewitz C."/>
            <person name="Eisen J.A."/>
            <person name="Timmis K.N."/>
            <person name="Duesterhoeft A."/>
            <person name="Tuemmler B."/>
            <person name="Fraser C.M."/>
        </authorList>
    </citation>
    <scope>NUCLEOTIDE SEQUENCE [LARGE SCALE GENOMIC DNA]</scope>
    <source>
        <strain>ATCC 47054 / DSM 6125 / CFBP 8728 / NCIMB 11950 / KT2440</strain>
    </source>
</reference>
<name>MSRP_PSEPK</name>
<evidence type="ECO:0000255" key="1">
    <source>
        <dbReference type="HAMAP-Rule" id="MF_01206"/>
    </source>
</evidence>
<evidence type="ECO:0000305" key="2"/>